<dbReference type="EC" id="6.3.2.8" evidence="1"/>
<dbReference type="EMBL" id="CP000020">
    <property type="protein sequence ID" value="AAW86695.1"/>
    <property type="molecule type" value="Genomic_DNA"/>
</dbReference>
<dbReference type="RefSeq" id="WP_011262631.1">
    <property type="nucleotide sequence ID" value="NC_006840.2"/>
</dbReference>
<dbReference type="RefSeq" id="YP_205583.1">
    <property type="nucleotide sequence ID" value="NC_006840.2"/>
</dbReference>
<dbReference type="SMR" id="Q5E2Q1"/>
<dbReference type="STRING" id="312309.VF_2200"/>
<dbReference type="EnsemblBacteria" id="AAW86695">
    <property type="protein sequence ID" value="AAW86695"/>
    <property type="gene ID" value="VF_2200"/>
</dbReference>
<dbReference type="GeneID" id="54164916"/>
<dbReference type="KEGG" id="vfi:VF_2200"/>
<dbReference type="PATRIC" id="fig|312309.11.peg.2239"/>
<dbReference type="eggNOG" id="COG0773">
    <property type="taxonomic scope" value="Bacteria"/>
</dbReference>
<dbReference type="HOGENOM" id="CLU_028104_2_2_6"/>
<dbReference type="OrthoDB" id="9804126at2"/>
<dbReference type="UniPathway" id="UPA00219"/>
<dbReference type="Proteomes" id="UP000000537">
    <property type="component" value="Chromosome I"/>
</dbReference>
<dbReference type="GO" id="GO:0005737">
    <property type="term" value="C:cytoplasm"/>
    <property type="evidence" value="ECO:0007669"/>
    <property type="project" value="UniProtKB-SubCell"/>
</dbReference>
<dbReference type="GO" id="GO:0005524">
    <property type="term" value="F:ATP binding"/>
    <property type="evidence" value="ECO:0007669"/>
    <property type="project" value="UniProtKB-UniRule"/>
</dbReference>
<dbReference type="GO" id="GO:0008763">
    <property type="term" value="F:UDP-N-acetylmuramate-L-alanine ligase activity"/>
    <property type="evidence" value="ECO:0007669"/>
    <property type="project" value="UniProtKB-UniRule"/>
</dbReference>
<dbReference type="GO" id="GO:0051301">
    <property type="term" value="P:cell division"/>
    <property type="evidence" value="ECO:0007669"/>
    <property type="project" value="UniProtKB-KW"/>
</dbReference>
<dbReference type="GO" id="GO:0071555">
    <property type="term" value="P:cell wall organization"/>
    <property type="evidence" value="ECO:0007669"/>
    <property type="project" value="UniProtKB-KW"/>
</dbReference>
<dbReference type="GO" id="GO:0009252">
    <property type="term" value="P:peptidoglycan biosynthetic process"/>
    <property type="evidence" value="ECO:0007669"/>
    <property type="project" value="UniProtKB-UniRule"/>
</dbReference>
<dbReference type="GO" id="GO:0008360">
    <property type="term" value="P:regulation of cell shape"/>
    <property type="evidence" value="ECO:0007669"/>
    <property type="project" value="UniProtKB-KW"/>
</dbReference>
<dbReference type="FunFam" id="3.40.1190.10:FF:000001">
    <property type="entry name" value="UDP-N-acetylmuramate--L-alanine ligase"/>
    <property type="match status" value="1"/>
</dbReference>
<dbReference type="FunFam" id="3.40.50.720:FF:000046">
    <property type="entry name" value="UDP-N-acetylmuramate--L-alanine ligase"/>
    <property type="match status" value="1"/>
</dbReference>
<dbReference type="Gene3D" id="3.90.190.20">
    <property type="entry name" value="Mur ligase, C-terminal domain"/>
    <property type="match status" value="1"/>
</dbReference>
<dbReference type="Gene3D" id="3.40.1190.10">
    <property type="entry name" value="Mur-like, catalytic domain"/>
    <property type="match status" value="1"/>
</dbReference>
<dbReference type="Gene3D" id="3.40.50.720">
    <property type="entry name" value="NAD(P)-binding Rossmann-like Domain"/>
    <property type="match status" value="1"/>
</dbReference>
<dbReference type="HAMAP" id="MF_00046">
    <property type="entry name" value="MurC"/>
    <property type="match status" value="1"/>
</dbReference>
<dbReference type="InterPro" id="IPR036565">
    <property type="entry name" value="Mur-like_cat_sf"/>
</dbReference>
<dbReference type="InterPro" id="IPR004101">
    <property type="entry name" value="Mur_ligase_C"/>
</dbReference>
<dbReference type="InterPro" id="IPR036615">
    <property type="entry name" value="Mur_ligase_C_dom_sf"/>
</dbReference>
<dbReference type="InterPro" id="IPR013221">
    <property type="entry name" value="Mur_ligase_cen"/>
</dbReference>
<dbReference type="InterPro" id="IPR000713">
    <property type="entry name" value="Mur_ligase_N"/>
</dbReference>
<dbReference type="InterPro" id="IPR050061">
    <property type="entry name" value="MurCDEF_pg_biosynth"/>
</dbReference>
<dbReference type="InterPro" id="IPR005758">
    <property type="entry name" value="UDP-N-AcMur_Ala_ligase_MurC"/>
</dbReference>
<dbReference type="NCBIfam" id="TIGR01082">
    <property type="entry name" value="murC"/>
    <property type="match status" value="1"/>
</dbReference>
<dbReference type="PANTHER" id="PTHR43445:SF3">
    <property type="entry name" value="UDP-N-ACETYLMURAMATE--L-ALANINE LIGASE"/>
    <property type="match status" value="1"/>
</dbReference>
<dbReference type="PANTHER" id="PTHR43445">
    <property type="entry name" value="UDP-N-ACETYLMURAMATE--L-ALANINE LIGASE-RELATED"/>
    <property type="match status" value="1"/>
</dbReference>
<dbReference type="Pfam" id="PF01225">
    <property type="entry name" value="Mur_ligase"/>
    <property type="match status" value="1"/>
</dbReference>
<dbReference type="Pfam" id="PF02875">
    <property type="entry name" value="Mur_ligase_C"/>
    <property type="match status" value="1"/>
</dbReference>
<dbReference type="Pfam" id="PF08245">
    <property type="entry name" value="Mur_ligase_M"/>
    <property type="match status" value="1"/>
</dbReference>
<dbReference type="SUPFAM" id="SSF51984">
    <property type="entry name" value="MurCD N-terminal domain"/>
    <property type="match status" value="1"/>
</dbReference>
<dbReference type="SUPFAM" id="SSF53623">
    <property type="entry name" value="MurD-like peptide ligases, catalytic domain"/>
    <property type="match status" value="1"/>
</dbReference>
<dbReference type="SUPFAM" id="SSF53244">
    <property type="entry name" value="MurD-like peptide ligases, peptide-binding domain"/>
    <property type="match status" value="1"/>
</dbReference>
<accession>Q5E2Q1</accession>
<name>MURC_ALIF1</name>
<feature type="chain" id="PRO_0000242614" description="UDP-N-acetylmuramate--L-alanine ligase">
    <location>
        <begin position="1"/>
        <end position="487"/>
    </location>
</feature>
<feature type="binding site" evidence="1">
    <location>
        <begin position="129"/>
        <end position="135"/>
    </location>
    <ligand>
        <name>ATP</name>
        <dbReference type="ChEBI" id="CHEBI:30616"/>
    </ligand>
</feature>
<organism>
    <name type="scientific">Aliivibrio fischeri (strain ATCC 700601 / ES114)</name>
    <name type="common">Vibrio fischeri</name>
    <dbReference type="NCBI Taxonomy" id="312309"/>
    <lineage>
        <taxon>Bacteria</taxon>
        <taxon>Pseudomonadati</taxon>
        <taxon>Pseudomonadota</taxon>
        <taxon>Gammaproteobacteria</taxon>
        <taxon>Vibrionales</taxon>
        <taxon>Vibrionaceae</taxon>
        <taxon>Aliivibrio</taxon>
    </lineage>
</organism>
<keyword id="KW-0067">ATP-binding</keyword>
<keyword id="KW-0131">Cell cycle</keyword>
<keyword id="KW-0132">Cell division</keyword>
<keyword id="KW-0133">Cell shape</keyword>
<keyword id="KW-0961">Cell wall biogenesis/degradation</keyword>
<keyword id="KW-0963">Cytoplasm</keyword>
<keyword id="KW-0436">Ligase</keyword>
<keyword id="KW-0547">Nucleotide-binding</keyword>
<keyword id="KW-0573">Peptidoglycan synthesis</keyword>
<keyword id="KW-1185">Reference proteome</keyword>
<gene>
    <name evidence="1" type="primary">murC</name>
    <name type="ordered locus">VF_2200</name>
</gene>
<protein>
    <recommendedName>
        <fullName evidence="1">UDP-N-acetylmuramate--L-alanine ligase</fullName>
        <ecNumber evidence="1">6.3.2.8</ecNumber>
    </recommendedName>
    <alternativeName>
        <fullName evidence="1">UDP-N-acetylmuramoyl-L-alanine synthetase</fullName>
    </alternativeName>
</protein>
<comment type="function">
    <text evidence="1">Cell wall formation.</text>
</comment>
<comment type="catalytic activity">
    <reaction evidence="1">
        <text>UDP-N-acetyl-alpha-D-muramate + L-alanine + ATP = UDP-N-acetyl-alpha-D-muramoyl-L-alanine + ADP + phosphate + H(+)</text>
        <dbReference type="Rhea" id="RHEA:23372"/>
        <dbReference type="ChEBI" id="CHEBI:15378"/>
        <dbReference type="ChEBI" id="CHEBI:30616"/>
        <dbReference type="ChEBI" id="CHEBI:43474"/>
        <dbReference type="ChEBI" id="CHEBI:57972"/>
        <dbReference type="ChEBI" id="CHEBI:70757"/>
        <dbReference type="ChEBI" id="CHEBI:83898"/>
        <dbReference type="ChEBI" id="CHEBI:456216"/>
        <dbReference type="EC" id="6.3.2.8"/>
    </reaction>
</comment>
<comment type="pathway">
    <text evidence="1">Cell wall biogenesis; peptidoglycan biosynthesis.</text>
</comment>
<comment type="subcellular location">
    <subcellularLocation>
        <location evidence="1">Cytoplasm</location>
    </subcellularLocation>
</comment>
<comment type="similarity">
    <text evidence="1">Belongs to the MurCDEF family.</text>
</comment>
<proteinExistence type="inferred from homology"/>
<evidence type="ECO:0000255" key="1">
    <source>
        <dbReference type="HAMAP-Rule" id="MF_00046"/>
    </source>
</evidence>
<sequence>MTKEQKLQLAEIRTMIPEMRRVECIHFVGIGGAGMSGIAEVLLNEGYHISGSDMAENTVTVRLAQKGAEIFFGHQASNVAKASVVVVSTAIDPSNPEIVAAKENRIPVIRRAEMLAELMRYRHGIAVAGTHGKTTTTALTTQIYSEAGLDPTFVNGGLVKNAGTNARLGSSRFLIAEADESDASFLHLQPMVSIVTNIEADHMDTYGGDFETLKQTFIDFLHNLPFYGQAVMCVDDPVVRELLPQVSRQVITYGFSDDADVRLINYRQVGQQSFFTVQRKDRTDLDIVLNIPGKHNALNATAAIAVATEEDVEDEAILTALLNFEGAGRRFDQLGEFETGNGSAMLVDDYGHHPTEVDVTIKAARAGWAEKRLVMIFQPHRYSRTRDLYDDFANVLDNVDVLIMLDVYSAGETPIAGADGRALCRTIRGRGKIDPVFVPTIEALPPVLANIIQEGDLILTQGAGDVGKLAKQLASMELNIETMKKLG</sequence>
<reference key="1">
    <citation type="journal article" date="2005" name="Proc. Natl. Acad. Sci. U.S.A.">
        <title>Complete genome sequence of Vibrio fischeri: a symbiotic bacterium with pathogenic congeners.</title>
        <authorList>
            <person name="Ruby E.G."/>
            <person name="Urbanowski M."/>
            <person name="Campbell J."/>
            <person name="Dunn A."/>
            <person name="Faini M."/>
            <person name="Gunsalus R."/>
            <person name="Lostroh P."/>
            <person name="Lupp C."/>
            <person name="McCann J."/>
            <person name="Millikan D."/>
            <person name="Schaefer A."/>
            <person name="Stabb E."/>
            <person name="Stevens A."/>
            <person name="Visick K."/>
            <person name="Whistler C."/>
            <person name="Greenberg E.P."/>
        </authorList>
    </citation>
    <scope>NUCLEOTIDE SEQUENCE [LARGE SCALE GENOMIC DNA]</scope>
    <source>
        <strain>ATCC 700601 / ES114</strain>
    </source>
</reference>